<reference key="1">
    <citation type="journal article" date="1998" name="J. Biol. Chem.">
        <title>Molecular cloning and characterization of the murine staf cDNA encoding a transcription activating factor for the selenocysteine tRNA gene in mouse mammary gland.</title>
        <authorList>
            <person name="Adachi K."/>
            <person name="Saito H."/>
            <person name="Tanaka T."/>
            <person name="Oka T."/>
        </authorList>
    </citation>
    <scope>NUCLEOTIDE SEQUENCE [MRNA] (ISOFORM 1)</scope>
    <scope>FUNCTION</scope>
    <source>
        <strain>129/SvJ</strain>
        <tissue>Liver</tissue>
    </source>
</reference>
<reference key="2">
    <citation type="journal article" date="2000" name="Biochem. J.">
        <title>Genomic organization, chromosomal mapping and promoter analysis of the mouse selenocysteine tRNA gene transcription-activating factor (mStaf) gene.</title>
        <authorList>
            <person name="Adachi K."/>
            <person name="Katsuyama M."/>
            <person name="Song S."/>
            <person name="Oka T."/>
        </authorList>
    </citation>
    <scope>NUCLEOTIDE SEQUENCE [GENOMIC DNA]</scope>
</reference>
<reference key="3">
    <citation type="journal article" date="2001" name="Cytogenet. Cell Genet.">
        <title>Comparative architectural aspects of regions of conserved synteny on human chromosome 11p15.3 and mouse chromosome 7 (including genes WEE1 and LMO1).</title>
        <authorList>
            <person name="Cichutek A."/>
            <person name="Brueckmann T."/>
            <person name="Seipel B."/>
            <person name="Hauser H."/>
            <person name="Schlaubitz S."/>
            <person name="Prawitt D."/>
            <person name="Hankeln T."/>
            <person name="Schmidt E.R."/>
            <person name="Winterpacht A."/>
            <person name="Zabel B.U."/>
        </authorList>
    </citation>
    <scope>NUCLEOTIDE SEQUENCE [GENOMIC DNA]</scope>
</reference>
<reference key="4">
    <citation type="journal article" date="2005" name="Science">
        <title>The transcriptional landscape of the mammalian genome.</title>
        <authorList>
            <person name="Carninci P."/>
            <person name="Kasukawa T."/>
            <person name="Katayama S."/>
            <person name="Gough J."/>
            <person name="Frith M.C."/>
            <person name="Maeda N."/>
            <person name="Oyama R."/>
            <person name="Ravasi T."/>
            <person name="Lenhard B."/>
            <person name="Wells C."/>
            <person name="Kodzius R."/>
            <person name="Shimokawa K."/>
            <person name="Bajic V.B."/>
            <person name="Brenner S.E."/>
            <person name="Batalov S."/>
            <person name="Forrest A.R."/>
            <person name="Zavolan M."/>
            <person name="Davis M.J."/>
            <person name="Wilming L.G."/>
            <person name="Aidinis V."/>
            <person name="Allen J.E."/>
            <person name="Ambesi-Impiombato A."/>
            <person name="Apweiler R."/>
            <person name="Aturaliya R.N."/>
            <person name="Bailey T.L."/>
            <person name="Bansal M."/>
            <person name="Baxter L."/>
            <person name="Beisel K.W."/>
            <person name="Bersano T."/>
            <person name="Bono H."/>
            <person name="Chalk A.M."/>
            <person name="Chiu K.P."/>
            <person name="Choudhary V."/>
            <person name="Christoffels A."/>
            <person name="Clutterbuck D.R."/>
            <person name="Crowe M.L."/>
            <person name="Dalla E."/>
            <person name="Dalrymple B.P."/>
            <person name="de Bono B."/>
            <person name="Della Gatta G."/>
            <person name="di Bernardo D."/>
            <person name="Down T."/>
            <person name="Engstrom P."/>
            <person name="Fagiolini M."/>
            <person name="Faulkner G."/>
            <person name="Fletcher C.F."/>
            <person name="Fukushima T."/>
            <person name="Furuno M."/>
            <person name="Futaki S."/>
            <person name="Gariboldi M."/>
            <person name="Georgii-Hemming P."/>
            <person name="Gingeras T.R."/>
            <person name="Gojobori T."/>
            <person name="Green R.E."/>
            <person name="Gustincich S."/>
            <person name="Harbers M."/>
            <person name="Hayashi Y."/>
            <person name="Hensch T.K."/>
            <person name="Hirokawa N."/>
            <person name="Hill D."/>
            <person name="Huminiecki L."/>
            <person name="Iacono M."/>
            <person name="Ikeo K."/>
            <person name="Iwama A."/>
            <person name="Ishikawa T."/>
            <person name="Jakt M."/>
            <person name="Kanapin A."/>
            <person name="Katoh M."/>
            <person name="Kawasawa Y."/>
            <person name="Kelso J."/>
            <person name="Kitamura H."/>
            <person name="Kitano H."/>
            <person name="Kollias G."/>
            <person name="Krishnan S.P."/>
            <person name="Kruger A."/>
            <person name="Kummerfeld S.K."/>
            <person name="Kurochkin I.V."/>
            <person name="Lareau L.F."/>
            <person name="Lazarevic D."/>
            <person name="Lipovich L."/>
            <person name="Liu J."/>
            <person name="Liuni S."/>
            <person name="McWilliam S."/>
            <person name="Madan Babu M."/>
            <person name="Madera M."/>
            <person name="Marchionni L."/>
            <person name="Matsuda H."/>
            <person name="Matsuzawa S."/>
            <person name="Miki H."/>
            <person name="Mignone F."/>
            <person name="Miyake S."/>
            <person name="Morris K."/>
            <person name="Mottagui-Tabar S."/>
            <person name="Mulder N."/>
            <person name="Nakano N."/>
            <person name="Nakauchi H."/>
            <person name="Ng P."/>
            <person name="Nilsson R."/>
            <person name="Nishiguchi S."/>
            <person name="Nishikawa S."/>
            <person name="Nori F."/>
            <person name="Ohara O."/>
            <person name="Okazaki Y."/>
            <person name="Orlando V."/>
            <person name="Pang K.C."/>
            <person name="Pavan W.J."/>
            <person name="Pavesi G."/>
            <person name="Pesole G."/>
            <person name="Petrovsky N."/>
            <person name="Piazza S."/>
            <person name="Reed J."/>
            <person name="Reid J.F."/>
            <person name="Ring B.Z."/>
            <person name="Ringwald M."/>
            <person name="Rost B."/>
            <person name="Ruan Y."/>
            <person name="Salzberg S.L."/>
            <person name="Sandelin A."/>
            <person name="Schneider C."/>
            <person name="Schoenbach C."/>
            <person name="Sekiguchi K."/>
            <person name="Semple C.A."/>
            <person name="Seno S."/>
            <person name="Sessa L."/>
            <person name="Sheng Y."/>
            <person name="Shibata Y."/>
            <person name="Shimada H."/>
            <person name="Shimada K."/>
            <person name="Silva D."/>
            <person name="Sinclair B."/>
            <person name="Sperling S."/>
            <person name="Stupka E."/>
            <person name="Sugiura K."/>
            <person name="Sultana R."/>
            <person name="Takenaka Y."/>
            <person name="Taki K."/>
            <person name="Tammoja K."/>
            <person name="Tan S.L."/>
            <person name="Tang S."/>
            <person name="Taylor M.S."/>
            <person name="Tegner J."/>
            <person name="Teichmann S.A."/>
            <person name="Ueda H.R."/>
            <person name="van Nimwegen E."/>
            <person name="Verardo R."/>
            <person name="Wei C.L."/>
            <person name="Yagi K."/>
            <person name="Yamanishi H."/>
            <person name="Zabarovsky E."/>
            <person name="Zhu S."/>
            <person name="Zimmer A."/>
            <person name="Hide W."/>
            <person name="Bult C."/>
            <person name="Grimmond S.M."/>
            <person name="Teasdale R.D."/>
            <person name="Liu E.T."/>
            <person name="Brusic V."/>
            <person name="Quackenbush J."/>
            <person name="Wahlestedt C."/>
            <person name="Mattick J.S."/>
            <person name="Hume D.A."/>
            <person name="Kai C."/>
            <person name="Sasaki D."/>
            <person name="Tomaru Y."/>
            <person name="Fukuda S."/>
            <person name="Kanamori-Katayama M."/>
            <person name="Suzuki M."/>
            <person name="Aoki J."/>
            <person name="Arakawa T."/>
            <person name="Iida J."/>
            <person name="Imamura K."/>
            <person name="Itoh M."/>
            <person name="Kato T."/>
            <person name="Kawaji H."/>
            <person name="Kawagashira N."/>
            <person name="Kawashima T."/>
            <person name="Kojima M."/>
            <person name="Kondo S."/>
            <person name="Konno H."/>
            <person name="Nakano K."/>
            <person name="Ninomiya N."/>
            <person name="Nishio T."/>
            <person name="Okada M."/>
            <person name="Plessy C."/>
            <person name="Shibata K."/>
            <person name="Shiraki T."/>
            <person name="Suzuki S."/>
            <person name="Tagami M."/>
            <person name="Waki K."/>
            <person name="Watahiki A."/>
            <person name="Okamura-Oho Y."/>
            <person name="Suzuki H."/>
            <person name="Kawai J."/>
            <person name="Hayashizaki Y."/>
        </authorList>
    </citation>
    <scope>NUCLEOTIDE SEQUENCE [LARGE SCALE MRNA] (ISOFORMS 1 AND 2)</scope>
    <source>
        <strain>C57BL/6J</strain>
        <tissue>Cerebellum</tissue>
        <tissue>Skin</tissue>
        <tissue>Testis</tissue>
    </source>
</reference>
<reference key="5">
    <citation type="journal article" date="2004" name="Genome Res.">
        <title>The status, quality, and expansion of the NIH full-length cDNA project: the Mammalian Gene Collection (MGC).</title>
        <authorList>
            <consortium name="The MGC Project Team"/>
        </authorList>
    </citation>
    <scope>NUCLEOTIDE SEQUENCE [LARGE SCALE MRNA] (ISOFORM 3)</scope>
    <source>
        <strain>FVB/N</strain>
        <tissue>Mammary tumor</tissue>
    </source>
</reference>
<reference key="6">
    <citation type="journal article" date="2010" name="Cell">
        <title>A tissue-specific atlas of mouse protein phosphorylation and expression.</title>
        <authorList>
            <person name="Huttlin E.L."/>
            <person name="Jedrychowski M.P."/>
            <person name="Elias J.E."/>
            <person name="Goswami T."/>
            <person name="Rad R."/>
            <person name="Beausoleil S.A."/>
            <person name="Villen J."/>
            <person name="Haas W."/>
            <person name="Sowa M.E."/>
            <person name="Gygi S.P."/>
        </authorList>
    </citation>
    <scope>IDENTIFICATION BY MASS SPECTROMETRY [LARGE SCALE ANALYSIS]</scope>
    <source>
        <tissue>Spleen</tissue>
    </source>
</reference>
<organism>
    <name type="scientific">Mus musculus</name>
    <name type="common">Mouse</name>
    <dbReference type="NCBI Taxonomy" id="10090"/>
    <lineage>
        <taxon>Eukaryota</taxon>
        <taxon>Metazoa</taxon>
        <taxon>Chordata</taxon>
        <taxon>Craniata</taxon>
        <taxon>Vertebrata</taxon>
        <taxon>Euteleostomi</taxon>
        <taxon>Mammalia</taxon>
        <taxon>Eutheria</taxon>
        <taxon>Euarchontoglires</taxon>
        <taxon>Glires</taxon>
        <taxon>Rodentia</taxon>
        <taxon>Myomorpha</taxon>
        <taxon>Muroidea</taxon>
        <taxon>Muridae</taxon>
        <taxon>Murinae</taxon>
        <taxon>Mus</taxon>
        <taxon>Mus</taxon>
    </lineage>
</organism>
<proteinExistence type="evidence at protein level"/>
<gene>
    <name type="primary">Znf143</name>
    <name type="synonym">Staf</name>
    <name type="synonym">Zfp143</name>
</gene>
<sequence length="638" mass="69040">MLLAQINRDSQGMTEFPGGGMEAQHVTLCLTEAVTVADGDNLENMEGVSLQAVTLADGSTAYIQHNSKDGRLIDGQVIQLEDGSAAYVQHVPIPKSTGDSLRLEDGQAVQLEDGTTAFIHHTSKDSYDQSSLQAVQLEDGTTAYIHHAVQVPQSDTILAIQADGTVAGLHTGDATIDPDTISALEQYAAKVSIDGSDGVTSTGMIGENEQEKKMQIVLQGHATRVTPKSQQSGEKAFRCKYDGCGKLYTTAHHLKVHERSHTGDRPYQCEHSGCGKAFATGYGLKSHFRTHTGEKPYRCSEDNCTKSFKTSGDLQKHIRTHTGERPFKCPIEGCGRSFTTSNIRKVHIRTHTGERPYYCTEPGCGRAFASATNYKNHVRIHTGEKPYVCTVPGCDKRFTEYSSLYKHHVVHTHSKPYNCNHCGKTYKQISTLAMHKRTAHNDTEPIEEEQEAFFEPPPGQGDDVLKGSQITYVTGVDGEDIVSTQVATVTQSGLSQQVTLISQDGTQHVNISQADMQAIGNTITMVTQDGTPITVPTHDAVISSAGTHSVAMVTAEGTEGQQVAIVAQDLAAFHTASSEMGHQQHSHHLVTTETRPLTLVATSNGTQIAVQLGEQPSLEEAIRIASRIQQGETPGLDD</sequence>
<accession>O70230</accession>
<accession>Q8BGB0</accession>
<accession>Q8CEI6</accession>
<accession>Q8CI27</accession>
<dbReference type="EMBL" id="AF011758">
    <property type="protein sequence ID" value="AAC16899.1"/>
    <property type="status" value="ALT_INIT"/>
    <property type="molecule type" value="mRNA"/>
</dbReference>
<dbReference type="EMBL" id="AJ278435">
    <property type="protein sequence ID" value="CAC17144.1"/>
    <property type="status" value="ALT_INIT"/>
    <property type="molecule type" value="Genomic_DNA"/>
</dbReference>
<dbReference type="EMBL" id="AK028056">
    <property type="protein sequence ID" value="BAC25726.1"/>
    <property type="status" value="ALT_FRAME"/>
    <property type="molecule type" value="mRNA"/>
</dbReference>
<dbReference type="EMBL" id="AK029078">
    <property type="protein sequence ID" value="BAC26281.1"/>
    <property type="status" value="ALT_INIT"/>
    <property type="molecule type" value="mRNA"/>
</dbReference>
<dbReference type="EMBL" id="AK029926">
    <property type="protein sequence ID" value="BAC26682.1"/>
    <property type="molecule type" value="mRNA"/>
</dbReference>
<dbReference type="EMBL" id="BC037658">
    <property type="protein sequence ID" value="AAH37658.1"/>
    <property type="status" value="ALT_INIT"/>
    <property type="molecule type" value="mRNA"/>
</dbReference>
<dbReference type="CCDS" id="CCDS57580.1">
    <molecule id="O70230-2"/>
</dbReference>
<dbReference type="CCDS" id="CCDS90307.1">
    <molecule id="O70230-1"/>
</dbReference>
<dbReference type="RefSeq" id="NP_033307.2">
    <molecule id="O70230-2"/>
    <property type="nucleotide sequence ID" value="NM_009281.3"/>
</dbReference>
<dbReference type="RefSeq" id="XP_006507595.1">
    <property type="nucleotide sequence ID" value="XM_006507532.2"/>
</dbReference>
<dbReference type="SMR" id="O70230"/>
<dbReference type="BioGRID" id="203516">
    <property type="interactions" value="7"/>
</dbReference>
<dbReference type="FunCoup" id="O70230">
    <property type="interactions" value="3295"/>
</dbReference>
<dbReference type="IntAct" id="O70230">
    <property type="interactions" value="4"/>
</dbReference>
<dbReference type="MINT" id="O70230"/>
<dbReference type="STRING" id="10090.ENSMUSP00000147673"/>
<dbReference type="iPTMnet" id="O70230"/>
<dbReference type="PhosphoSitePlus" id="O70230"/>
<dbReference type="PaxDb" id="10090-ENSMUSP00000081778"/>
<dbReference type="PeptideAtlas" id="O70230"/>
<dbReference type="ProteomicsDB" id="274999">
    <molecule id="O70230-1"/>
</dbReference>
<dbReference type="ProteomicsDB" id="275000">
    <molecule id="O70230-2"/>
</dbReference>
<dbReference type="ProteomicsDB" id="275001">
    <molecule id="O70230-3"/>
</dbReference>
<dbReference type="Pumba" id="O70230"/>
<dbReference type="Antibodypedia" id="927">
    <property type="antibodies" value="86 antibodies from 25 providers"/>
</dbReference>
<dbReference type="DNASU" id="20841"/>
<dbReference type="Ensembl" id="ENSMUST00000084727.11">
    <molecule id="O70230-1"/>
    <property type="protein sequence ID" value="ENSMUSP00000081778.5"/>
    <property type="gene ID" value="ENSMUSG00000061079.15"/>
</dbReference>
<dbReference type="Ensembl" id="ENSMUST00000169638.4">
    <molecule id="O70230-3"/>
    <property type="protein sequence ID" value="ENSMUSP00000126015.3"/>
    <property type="gene ID" value="ENSMUSG00000061079.15"/>
</dbReference>
<dbReference type="Ensembl" id="ENSMUST00000209505.2">
    <molecule id="O70230-2"/>
    <property type="protein sequence ID" value="ENSMUSP00000147673.2"/>
    <property type="gene ID" value="ENSMUSG00000061079.15"/>
</dbReference>
<dbReference type="Ensembl" id="ENSMUST00000211798.2">
    <molecule id="O70230-2"/>
    <property type="protein sequence ID" value="ENSMUSP00000148235.2"/>
    <property type="gene ID" value="ENSMUSG00000061079.15"/>
</dbReference>
<dbReference type="GeneID" id="20841"/>
<dbReference type="KEGG" id="mmu:20841"/>
<dbReference type="UCSC" id="uc009jew.1">
    <molecule id="O70230-2"/>
    <property type="organism name" value="mouse"/>
</dbReference>
<dbReference type="UCSC" id="uc009jex.1">
    <molecule id="O70230-1"/>
    <property type="organism name" value="mouse"/>
</dbReference>
<dbReference type="UCSC" id="uc012fse.1">
    <molecule id="O70230-3"/>
    <property type="organism name" value="mouse"/>
</dbReference>
<dbReference type="AGR" id="MGI:1277969"/>
<dbReference type="CTD" id="20841"/>
<dbReference type="MGI" id="MGI:1277969">
    <property type="gene designation" value="Zfp143"/>
</dbReference>
<dbReference type="VEuPathDB" id="HostDB:ENSMUSG00000061079"/>
<dbReference type="eggNOG" id="KOG1721">
    <property type="taxonomic scope" value="Eukaryota"/>
</dbReference>
<dbReference type="GeneTree" id="ENSGT00940000157584"/>
<dbReference type="HOGENOM" id="CLU_027168_0_0_1"/>
<dbReference type="InParanoid" id="O70230"/>
<dbReference type="OMA" id="FPALMHG"/>
<dbReference type="OrthoDB" id="6077919at2759"/>
<dbReference type="PhylomeDB" id="O70230"/>
<dbReference type="TreeFam" id="TF333498"/>
<dbReference type="BioGRID-ORCS" id="20841">
    <property type="hits" value="3 hits in 78 CRISPR screens"/>
</dbReference>
<dbReference type="ChiTaRS" id="Zfp143">
    <property type="organism name" value="mouse"/>
</dbReference>
<dbReference type="PRO" id="PR:O70230"/>
<dbReference type="Proteomes" id="UP000000589">
    <property type="component" value="Chromosome 7"/>
</dbReference>
<dbReference type="RNAct" id="O70230">
    <property type="molecule type" value="protein"/>
</dbReference>
<dbReference type="Bgee" id="ENSMUSG00000061079">
    <property type="expression patterns" value="Expressed in cleaving embryo and 246 other cell types or tissues"/>
</dbReference>
<dbReference type="GO" id="GO:0005634">
    <property type="term" value="C:nucleus"/>
    <property type="evidence" value="ECO:0007669"/>
    <property type="project" value="UniProtKB-SubCell"/>
</dbReference>
<dbReference type="GO" id="GO:0001228">
    <property type="term" value="F:DNA-binding transcription activator activity, RNA polymerase II-specific"/>
    <property type="evidence" value="ECO:0007669"/>
    <property type="project" value="Ensembl"/>
</dbReference>
<dbReference type="GO" id="GO:0000978">
    <property type="term" value="F:RNA polymerase II cis-regulatory region sequence-specific DNA binding"/>
    <property type="evidence" value="ECO:0000314"/>
    <property type="project" value="MGI"/>
</dbReference>
<dbReference type="GO" id="GO:0008270">
    <property type="term" value="F:zinc ion binding"/>
    <property type="evidence" value="ECO:0007669"/>
    <property type="project" value="UniProtKB-KW"/>
</dbReference>
<dbReference type="FunFam" id="3.30.160.60:FF:000071">
    <property type="entry name" value="Putative zinc finger protein 143"/>
    <property type="match status" value="1"/>
</dbReference>
<dbReference type="FunFam" id="3.30.160.60:FF:000125">
    <property type="entry name" value="Putative zinc finger protein 143"/>
    <property type="match status" value="1"/>
</dbReference>
<dbReference type="FunFam" id="3.30.160.60:FF:000137">
    <property type="entry name" value="Putative zinc finger protein 143"/>
    <property type="match status" value="1"/>
</dbReference>
<dbReference type="FunFam" id="3.30.160.60:FF:000142">
    <property type="entry name" value="Putative zinc finger protein 143"/>
    <property type="match status" value="1"/>
</dbReference>
<dbReference type="FunFam" id="3.30.160.60:FF:000072">
    <property type="entry name" value="zinc finger protein 143 isoform X1"/>
    <property type="match status" value="1"/>
</dbReference>
<dbReference type="FunFam" id="3.30.160.60:FF:000236">
    <property type="entry name" value="zinc finger protein 143 isoform X1"/>
    <property type="match status" value="1"/>
</dbReference>
<dbReference type="FunFam" id="3.30.160.60:FF:000016">
    <property type="entry name" value="zinc finger protein 37 homolog"/>
    <property type="match status" value="1"/>
</dbReference>
<dbReference type="Gene3D" id="3.30.160.60">
    <property type="entry name" value="Classic Zinc Finger"/>
    <property type="match status" value="7"/>
</dbReference>
<dbReference type="InterPro" id="IPR036236">
    <property type="entry name" value="Znf_C2H2_sf"/>
</dbReference>
<dbReference type="InterPro" id="IPR013087">
    <property type="entry name" value="Znf_C2H2_type"/>
</dbReference>
<dbReference type="PANTHER" id="PTHR14003">
    <property type="entry name" value="TRANSCRIPTIONAL REPRESSOR PROTEIN YY"/>
    <property type="match status" value="1"/>
</dbReference>
<dbReference type="PANTHER" id="PTHR14003:SF23">
    <property type="entry name" value="ZINC FINGER PROTEIN 143"/>
    <property type="match status" value="1"/>
</dbReference>
<dbReference type="Pfam" id="PF00096">
    <property type="entry name" value="zf-C2H2"/>
    <property type="match status" value="6"/>
</dbReference>
<dbReference type="SMART" id="SM00355">
    <property type="entry name" value="ZnF_C2H2"/>
    <property type="match status" value="7"/>
</dbReference>
<dbReference type="SUPFAM" id="SSF57667">
    <property type="entry name" value="beta-beta-alpha zinc fingers"/>
    <property type="match status" value="3"/>
</dbReference>
<dbReference type="PROSITE" id="PS00028">
    <property type="entry name" value="ZINC_FINGER_C2H2_1"/>
    <property type="match status" value="7"/>
</dbReference>
<dbReference type="PROSITE" id="PS50157">
    <property type="entry name" value="ZINC_FINGER_C2H2_2"/>
    <property type="match status" value="7"/>
</dbReference>
<comment type="function">
    <text evidence="1 2 4">Transcriptional activator. Activates the gene for selenocysteine tRNA (tRNAsec). Binds to the SPH motif of small nuclear RNA (snRNA) gene promoters. Participates in efficient U6 RNA polymerase III transcription via its interaction with CHD8 (By similarity). In complex with HCFC1 and ZNF143, regulates the expression of several genes, including AP2S1, ESCO2, OPHN1, RBL1, UBXN8 and ZNF32 (By similarity).</text>
</comment>
<comment type="subunit">
    <text evidence="2">Interacts with CHD8 (By similarity). Forms a complex with HCFC1 and ZNF143 (By similarity).</text>
</comment>
<comment type="interaction">
    <interactant intactId="EBI-5691478">
        <id>O70230</id>
    </interactant>
    <interactant intactId="EBI-2312582">
        <id>Q8BX22</id>
        <label>Sall4</label>
    </interactant>
    <organismsDiffer>false</organismsDiffer>
    <experiments>2</experiments>
</comment>
<comment type="subcellular location">
    <subcellularLocation>
        <location evidence="7">Nucleus</location>
    </subcellularLocation>
</comment>
<comment type="alternative products">
    <event type="alternative splicing"/>
    <isoform>
        <id>O70230-1</id>
        <name>1</name>
        <sequence type="displayed"/>
    </isoform>
    <isoform>
        <id>O70230-2</id>
        <name>2</name>
        <sequence type="described" ref="VSP_036980"/>
    </isoform>
    <isoform>
        <id>O70230-3</id>
        <name>3</name>
        <sequence type="described" ref="VSP_036979"/>
    </isoform>
</comment>
<comment type="similarity">
    <text evidence="7">Belongs to the GLI C2H2-type zinc-finger protein family.</text>
</comment>
<comment type="sequence caution" evidence="7">
    <conflict type="erroneous initiation">
        <sequence resource="EMBL-CDS" id="AAC16899"/>
    </conflict>
</comment>
<comment type="sequence caution" evidence="7">
    <conflict type="erroneous initiation">
        <sequence resource="EMBL-CDS" id="AAH37658"/>
    </conflict>
</comment>
<comment type="sequence caution" evidence="7">
    <conflict type="frameshift">
        <sequence resource="EMBL-CDS" id="BAC25726"/>
    </conflict>
</comment>
<comment type="sequence caution" evidence="7">
    <conflict type="erroneous initiation">
        <sequence resource="EMBL-CDS" id="BAC26281"/>
    </conflict>
</comment>
<comment type="sequence caution" evidence="7">
    <conflict type="erroneous initiation">
        <sequence resource="EMBL-CDS" id="CAC17144"/>
    </conflict>
</comment>
<protein>
    <recommendedName>
        <fullName>Zinc finger protein 143</fullName>
        <shortName>Zfp-143</shortName>
    </recommendedName>
    <alternativeName>
        <fullName>Selenocysteine tRNA gene transcription-activating factor</fullName>
        <shortName>mStaf</shortName>
    </alternativeName>
</protein>
<keyword id="KW-0007">Acetylation</keyword>
<keyword id="KW-0010">Activator</keyword>
<keyword id="KW-0025">Alternative splicing</keyword>
<keyword id="KW-0238">DNA-binding</keyword>
<keyword id="KW-1017">Isopeptide bond</keyword>
<keyword id="KW-0479">Metal-binding</keyword>
<keyword id="KW-0539">Nucleus</keyword>
<keyword id="KW-0597">Phosphoprotein</keyword>
<keyword id="KW-1185">Reference proteome</keyword>
<keyword id="KW-0677">Repeat</keyword>
<keyword id="KW-0804">Transcription</keyword>
<keyword id="KW-0805">Transcription regulation</keyword>
<keyword id="KW-0832">Ubl conjugation</keyword>
<keyword id="KW-0862">Zinc</keyword>
<keyword id="KW-0863">Zinc-finger</keyword>
<name>ZN143_MOUSE</name>
<feature type="chain" id="PRO_0000248071" description="Zinc finger protein 143">
    <location>
        <begin position="1"/>
        <end position="638"/>
    </location>
</feature>
<feature type="zinc finger region" description="C2H2-type 1" evidence="3">
    <location>
        <begin position="237"/>
        <end position="261"/>
    </location>
</feature>
<feature type="zinc finger region" description="C2H2-type 2" evidence="3">
    <location>
        <begin position="267"/>
        <end position="291"/>
    </location>
</feature>
<feature type="zinc finger region" description="C2H2-type 3" evidence="3">
    <location>
        <begin position="297"/>
        <end position="321"/>
    </location>
</feature>
<feature type="zinc finger region" description="C2H2-type 4" evidence="3">
    <location>
        <begin position="327"/>
        <end position="351"/>
    </location>
</feature>
<feature type="zinc finger region" description="C2H2-type 5" evidence="3">
    <location>
        <begin position="357"/>
        <end position="381"/>
    </location>
</feature>
<feature type="zinc finger region" description="C2H2-type 6" evidence="3">
    <location>
        <begin position="387"/>
        <end position="411"/>
    </location>
</feature>
<feature type="zinc finger region" description="C2H2-type 7" evidence="3">
    <location>
        <begin position="417"/>
        <end position="440"/>
    </location>
</feature>
<feature type="modified residue" description="N-acetylmethionine" evidence="2">
    <location>
        <position position="1"/>
    </location>
</feature>
<feature type="modified residue" description="Phosphothreonine" evidence="2">
    <location>
        <position position="352"/>
    </location>
</feature>
<feature type="cross-link" description="Glycyl lysine isopeptide (Lys-Gly) (interchain with G-Cter in SUMO2)" evidence="2">
    <location>
        <position position="213"/>
    </location>
</feature>
<feature type="cross-link" description="Glycyl lysine isopeptide (Lys-Gly) (interchain with G-Cter in SUMO2)" evidence="2">
    <location>
        <position position="406"/>
    </location>
</feature>
<feature type="splice variant" id="VSP_036979" description="In isoform 3." evidence="5">
    <original>TGDSLRLEDGQAVQLEDGTTAFIHHTSKD</original>
    <variation>N</variation>
    <location>
        <begin position="97"/>
        <end position="125"/>
    </location>
</feature>
<feature type="splice variant" id="VSP_036980" description="In isoform 2." evidence="6">
    <original>TG</original>
    <variation>R</variation>
    <location>
        <begin position="97"/>
        <end position="98"/>
    </location>
</feature>
<feature type="sequence conflict" description="In Ref. 4; BAC25726." evidence="7" ref="4">
    <original>K</original>
    <variation>T</variation>
    <location>
        <position position="190"/>
    </location>
</feature>
<feature type="sequence conflict" description="In Ref. 4; BAC25726." evidence="7" ref="4">
    <original>T</original>
    <variation>K</variation>
    <location>
        <position position="250"/>
    </location>
</feature>
<feature type="sequence conflict" description="In Ref. 4; BAC25726." evidence="7" ref="4">
    <original>H</original>
    <variation>D</variation>
    <location>
        <position position="261"/>
    </location>
</feature>
<feature type="sequence conflict" description="In Ref. 4; BAC25726." evidence="7" ref="4">
    <original>N</original>
    <variation>T</variation>
    <location>
        <position position="342"/>
    </location>
</feature>
<feature type="sequence conflict" description="In Ref. 4; BAC25726." evidence="7" ref="4">
    <original>H</original>
    <variation>N</variation>
    <location>
        <position position="508"/>
    </location>
</feature>
<feature type="sequence conflict" description="In Ref. 4; BAC25726." evidence="7" ref="4">
    <original>Q</original>
    <variation>K</variation>
    <location>
        <position position="528"/>
    </location>
</feature>
<feature type="sequence conflict" description="In Ref. 4; BAC25726." evidence="7" ref="4">
    <original>L</original>
    <variation>V</variation>
    <location>
        <position position="618"/>
    </location>
</feature>
<feature type="sequence conflict" description="In Ref. 4; BAC25726." evidence="7" ref="4">
    <original>P</original>
    <variation>A</variation>
    <location>
        <position position="634"/>
    </location>
</feature>
<evidence type="ECO:0000250" key="1"/>
<evidence type="ECO:0000250" key="2">
    <source>
        <dbReference type="UniProtKB" id="P52747"/>
    </source>
</evidence>
<evidence type="ECO:0000255" key="3">
    <source>
        <dbReference type="PROSITE-ProRule" id="PRU00042"/>
    </source>
</evidence>
<evidence type="ECO:0000269" key="4">
    <source>
    </source>
</evidence>
<evidence type="ECO:0000303" key="5">
    <source>
    </source>
</evidence>
<evidence type="ECO:0000303" key="6">
    <source>
    </source>
</evidence>
<evidence type="ECO:0000305" key="7"/>